<name>DEFI_AESCY</name>
<dbReference type="PIR" id="S27242">
    <property type="entry name" value="S27242"/>
</dbReference>
<dbReference type="SMR" id="P80154"/>
<dbReference type="GO" id="GO:0005576">
    <property type="term" value="C:extracellular region"/>
    <property type="evidence" value="ECO:0007669"/>
    <property type="project" value="UniProtKB-SubCell"/>
</dbReference>
<dbReference type="GO" id="GO:0042742">
    <property type="term" value="P:defense response to bacterium"/>
    <property type="evidence" value="ECO:0007669"/>
    <property type="project" value="UniProtKB-KW"/>
</dbReference>
<dbReference type="GO" id="GO:0045087">
    <property type="term" value="P:innate immune response"/>
    <property type="evidence" value="ECO:0007669"/>
    <property type="project" value="UniProtKB-KW"/>
</dbReference>
<dbReference type="Gene3D" id="3.30.30.10">
    <property type="entry name" value="Knottin, scorpion toxin-like"/>
    <property type="match status" value="1"/>
</dbReference>
<dbReference type="InterPro" id="IPR001542">
    <property type="entry name" value="Defensin_invertebrate/fungal"/>
</dbReference>
<dbReference type="InterPro" id="IPR036574">
    <property type="entry name" value="Scorpion_toxin-like_sf"/>
</dbReference>
<dbReference type="Pfam" id="PF01097">
    <property type="entry name" value="Defensin_2"/>
    <property type="match status" value="1"/>
</dbReference>
<dbReference type="SUPFAM" id="SSF57095">
    <property type="entry name" value="Scorpion toxin-like"/>
    <property type="match status" value="1"/>
</dbReference>
<dbReference type="PROSITE" id="PS51378">
    <property type="entry name" value="INVERT_DEFENSINS"/>
    <property type="match status" value="1"/>
</dbReference>
<sequence>GFGCPLDQMQCHRHCQTITGRSGGYCSGPLKLTCTCYR</sequence>
<comment type="function">
    <text evidence="3">Mediates the inducible antibacterial activity in larvae of A.cyanea.</text>
</comment>
<comment type="subcellular location">
    <subcellularLocation>
        <location evidence="3">Secreted</location>
    </subcellularLocation>
</comment>
<comment type="similarity">
    <text evidence="2">Belongs to the invertebrate defensin family. Type 2 subfamily.</text>
</comment>
<accession>P80154</accession>
<protein>
    <recommendedName>
        <fullName evidence="4">Defensin</fullName>
    </recommendedName>
</protein>
<keyword id="KW-0044">Antibiotic</keyword>
<keyword id="KW-0929">Antimicrobial</keyword>
<keyword id="KW-0211">Defensin</keyword>
<keyword id="KW-0903">Direct protein sequencing</keyword>
<keyword id="KW-1015">Disulfide bond</keyword>
<keyword id="KW-0391">Immunity</keyword>
<keyword id="KW-0399">Innate immunity</keyword>
<keyword id="KW-0964">Secreted</keyword>
<evidence type="ECO:0000250" key="1">
    <source>
        <dbReference type="UniProtKB" id="I1T3C7"/>
    </source>
</evidence>
<evidence type="ECO:0000255" key="2">
    <source>
        <dbReference type="PROSITE-ProRule" id="PRU00710"/>
    </source>
</evidence>
<evidence type="ECO:0000269" key="3">
    <source>
    </source>
</evidence>
<evidence type="ECO:0000303" key="4">
    <source>
    </source>
</evidence>
<organism>
    <name type="scientific">Aeshna cyanea</name>
    <name type="common">Southern hawker dragonfly</name>
    <name type="synonym">Libellula cyanea</name>
    <dbReference type="NCBI Taxonomy" id="12921"/>
    <lineage>
        <taxon>Eukaryota</taxon>
        <taxon>Metazoa</taxon>
        <taxon>Ecdysozoa</taxon>
        <taxon>Arthropoda</taxon>
        <taxon>Hexapoda</taxon>
        <taxon>Insecta</taxon>
        <taxon>Pterygota</taxon>
        <taxon>Palaeoptera</taxon>
        <taxon>Odonata</taxon>
        <taxon>Epiprocta</taxon>
        <taxon>Anisoptera</taxon>
        <taxon>Aeshnidae</taxon>
        <taxon>Aeshna</taxon>
    </lineage>
</organism>
<proteinExistence type="evidence at protein level"/>
<feature type="peptide" id="PRO_0000044710" description="Defensin" evidence="3">
    <location>
        <begin position="1"/>
        <end position="38"/>
    </location>
</feature>
<feature type="disulfide bond" evidence="1">
    <location>
        <begin position="4"/>
        <end position="26"/>
    </location>
</feature>
<feature type="disulfide bond" evidence="1">
    <location>
        <begin position="11"/>
        <end position="34"/>
    </location>
</feature>
<feature type="disulfide bond" evidence="1">
    <location>
        <begin position="15"/>
        <end position="36"/>
    </location>
</feature>
<reference key="1">
    <citation type="journal article" date="1992" name="Eur. J. Biochem.">
        <title>A novel insect defensin mediates the inducible antibacterial activity in larvae of the dragonfly Aeschna cyanea (Paleoptera, Odonata).</title>
        <authorList>
            <person name="Bulet P."/>
            <person name="Cociancich S."/>
            <person name="Reuland M."/>
            <person name="Sauber F."/>
            <person name="Bischoff R."/>
            <person name="Hegy G."/>
            <person name="van Dorsselaer A."/>
            <person name="Hetru C."/>
            <person name="Hoffmann J.A."/>
        </authorList>
    </citation>
    <scope>PROTEIN SEQUENCE</scope>
    <scope>FUNCTION</scope>
    <scope>SUBCELLULAR LOCATION</scope>
    <source>
        <tissue>Hemolymph</tissue>
    </source>
</reference>